<accession>P37936</accession>
<evidence type="ECO:0000255" key="1">
    <source>
        <dbReference type="PROSITE-ProRule" id="PRU00108"/>
    </source>
</evidence>
<evidence type="ECO:0000256" key="2">
    <source>
        <dbReference type="SAM" id="MobiDB-lite"/>
    </source>
</evidence>
<feature type="chain" id="PRO_0000049187" description="Mating-type protein A-alpha Y1">
    <location>
        <begin position="1"/>
        <end position="891"/>
    </location>
</feature>
<feature type="DNA-binding region" description="Homeobox" evidence="1">
    <location>
        <begin position="146"/>
        <end position="205"/>
    </location>
</feature>
<feature type="region of interest" description="Disordered" evidence="2">
    <location>
        <begin position="241"/>
        <end position="291"/>
    </location>
</feature>
<feature type="region of interest" description="Disordered" evidence="2">
    <location>
        <begin position="319"/>
        <end position="339"/>
    </location>
</feature>
<feature type="region of interest" description="Disordered" evidence="2">
    <location>
        <begin position="393"/>
        <end position="437"/>
    </location>
</feature>
<feature type="region of interest" description="Disordered" evidence="2">
    <location>
        <begin position="610"/>
        <end position="718"/>
    </location>
</feature>
<feature type="region of interest" description="Disordered" evidence="2">
    <location>
        <begin position="800"/>
        <end position="822"/>
    </location>
</feature>
<feature type="compositionally biased region" description="Polar residues" evidence="2">
    <location>
        <begin position="244"/>
        <end position="257"/>
    </location>
</feature>
<feature type="compositionally biased region" description="Basic residues" evidence="2">
    <location>
        <begin position="328"/>
        <end position="337"/>
    </location>
</feature>
<feature type="compositionally biased region" description="Low complexity" evidence="2">
    <location>
        <begin position="427"/>
        <end position="437"/>
    </location>
</feature>
<feature type="compositionally biased region" description="Basic residues" evidence="2">
    <location>
        <begin position="627"/>
        <end position="638"/>
    </location>
</feature>
<feature type="compositionally biased region" description="Low complexity" evidence="2">
    <location>
        <begin position="651"/>
        <end position="667"/>
    </location>
</feature>
<feature type="compositionally biased region" description="Low complexity" evidence="2">
    <location>
        <begin position="676"/>
        <end position="710"/>
    </location>
</feature>
<feature type="compositionally biased region" description="Polar residues" evidence="2">
    <location>
        <begin position="800"/>
        <end position="818"/>
    </location>
</feature>
<proteinExistence type="evidence at transcript level"/>
<dbReference type="EMBL" id="M97179">
    <property type="protein sequence ID" value="AAB01367.1"/>
    <property type="molecule type" value="Genomic_DNA"/>
</dbReference>
<dbReference type="PIR" id="A46203">
    <property type="entry name" value="A46203"/>
</dbReference>
<dbReference type="SMR" id="P37936"/>
<dbReference type="VEuPathDB" id="FungiDB:SCHCODRAFT_02596714"/>
<dbReference type="GO" id="GO:0005634">
    <property type="term" value="C:nucleus"/>
    <property type="evidence" value="ECO:0007669"/>
    <property type="project" value="UniProtKB-SubCell"/>
</dbReference>
<dbReference type="GO" id="GO:0003677">
    <property type="term" value="F:DNA binding"/>
    <property type="evidence" value="ECO:0007669"/>
    <property type="project" value="UniProtKB-KW"/>
</dbReference>
<dbReference type="GO" id="GO:0000981">
    <property type="term" value="F:DNA-binding transcription factor activity, RNA polymerase II-specific"/>
    <property type="evidence" value="ECO:0007669"/>
    <property type="project" value="InterPro"/>
</dbReference>
<dbReference type="GO" id="GO:0019953">
    <property type="term" value="P:sexual reproduction"/>
    <property type="evidence" value="ECO:0007669"/>
    <property type="project" value="InterPro"/>
</dbReference>
<dbReference type="CDD" id="cd00086">
    <property type="entry name" value="homeodomain"/>
    <property type="match status" value="1"/>
</dbReference>
<dbReference type="Gene3D" id="1.10.10.60">
    <property type="entry name" value="Homeodomain-like"/>
    <property type="match status" value="1"/>
</dbReference>
<dbReference type="InterPro" id="IPR007689">
    <property type="entry name" value="AalphaY_mating_typ-dep-bd-dom"/>
</dbReference>
<dbReference type="InterPro" id="IPR001356">
    <property type="entry name" value="HD"/>
</dbReference>
<dbReference type="InterPro" id="IPR017970">
    <property type="entry name" value="Homeobox_CS"/>
</dbReference>
<dbReference type="InterPro" id="IPR009057">
    <property type="entry name" value="Homeodomain-like_sf"/>
</dbReference>
<dbReference type="Pfam" id="PF04611">
    <property type="entry name" value="AalphaY_MDB"/>
    <property type="match status" value="1"/>
</dbReference>
<dbReference type="Pfam" id="PF00046">
    <property type="entry name" value="Homeodomain"/>
    <property type="match status" value="1"/>
</dbReference>
<dbReference type="SMART" id="SM00389">
    <property type="entry name" value="HOX"/>
    <property type="match status" value="1"/>
</dbReference>
<dbReference type="SUPFAM" id="SSF46689">
    <property type="entry name" value="Homeodomain-like"/>
    <property type="match status" value="1"/>
</dbReference>
<dbReference type="PROSITE" id="PS00027">
    <property type="entry name" value="HOMEOBOX_1"/>
    <property type="match status" value="1"/>
</dbReference>
<dbReference type="PROSITE" id="PS50071">
    <property type="entry name" value="HOMEOBOX_2"/>
    <property type="match status" value="1"/>
</dbReference>
<organism>
    <name type="scientific">Schizophyllum commune</name>
    <name type="common">Split gill fungus</name>
    <dbReference type="NCBI Taxonomy" id="5334"/>
    <lineage>
        <taxon>Eukaryota</taxon>
        <taxon>Fungi</taxon>
        <taxon>Dikarya</taxon>
        <taxon>Basidiomycota</taxon>
        <taxon>Agaricomycotina</taxon>
        <taxon>Agaricomycetes</taxon>
        <taxon>Agaricomycetidae</taxon>
        <taxon>Agaricales</taxon>
        <taxon>Schizophyllaceae</taxon>
        <taxon>Schizophyllum</taxon>
    </lineage>
</organism>
<comment type="function">
    <text>Specifies A-alpha-1 mating-type. May regulate the expression of genes specific to the homokaryotic cell type.</text>
</comment>
<comment type="subcellular location">
    <subcellularLocation>
        <location evidence="1">Nucleus</location>
    </subcellularLocation>
</comment>
<comment type="developmental stage">
    <text>Expressed constitutively in homokaryons.</text>
</comment>
<name>MAAY1_SCHCO</name>
<reference key="1">
    <citation type="journal article" date="1992" name="Proc. Natl. Acad. Sci. U.S.A.">
        <title>The A alpha mating locus of Schizophyllum commune encodes two dissimilar multiallelic homeodomain proteins.</title>
        <authorList>
            <person name="Stankis M.M."/>
            <person name="Specht C.A."/>
            <person name="Yang H."/>
            <person name="Giasson L."/>
            <person name="Ullrich R.C."/>
            <person name="Novotny C.P."/>
        </authorList>
    </citation>
    <scope>NUCLEOTIDE SEQUENCE [GENOMIC DNA]</scope>
    <source>
        <strain>UVM 9-1</strain>
    </source>
</reference>
<keyword id="KW-0238">DNA-binding</keyword>
<keyword id="KW-0371">Homeobox</keyword>
<keyword id="KW-0539">Nucleus</keyword>
<keyword id="KW-0804">Transcription</keyword>
<keyword id="KW-0805">Transcription regulation</keyword>
<protein>
    <recommendedName>
        <fullName>Mating-type protein A-alpha Y1</fullName>
    </recommendedName>
</protein>
<sequence>MTDRLASLRAISASAKSMMSIAAARGAQPTAPIQTAPVHFDPLPTPYLDGIRARLTEVKLPPKALKSALNSYDQACARWRYSLDESFSQAARSVSPHNLHLLSTLRFRLYTEQVERWAVQVLQVAEQWRAEMEKQRAHIAASTDKSKKPRPKFHSEYTPLLELYFRFNAYPTYADRRVLAEKTGMLTRQITVWFQNHRRRAKGPLPRMTPTAKIPLEEFERERENLARKLLPMLLPPHLRPITLGNNKTPDLTTSSRARALPPAKEDKPPQVTRKTSKKVPKTAHPAPSTLVAPSQDTVMADAISTKKTKKAKSKQCADIEMKDSSKPKRRKMKKLPKGVVGTADVAMCIDPPQVPKKNKVKPKKSMAFDSQAELAFAQAAYPSPSKYAWVHTRKPQTDAPKAKASSVTSDVARLGKGRPGKPSPPASSTVPSRRVSTRLNAMRPPYAFPARYDSAAVPMTFAVAQVTKFTFATDSASFGFKPRISTRRPNITSDAMSQLVSSFERLRLLSVELSVSRNPPLPAFEHQRLVDLRVEGLTSGEVTALHFTPGAYAARLAVTYIPPRAPLPSTVLDLPRALRARLVHPMVLPETVTQPDAFAPFIALAERRARRKARKEKKRQEEKQAKKDKKERKKAGLPHRAPSTVDAPDVSSRASSLDSDVSTSARKSSKKSKRQPSSSSRASSVASSGRTPSLSSTSSRRSSGMSMPSTPGPEQSLPIVAASDFALGGEEDVSMDADLMAQLFGSDENADAVGYDLPMHPEPFTADMITFTSCADGALGDMTADVNMPNLGQSSIDDMNWTASVGSNAQDPASQESGGDEASHWLDISFDRPTTTSQINVLGGTYSCELGGSDNMNAPLDFSDLTFGLDTGADYFSGFNNTIGGTTIMV</sequence>